<evidence type="ECO:0000250" key="1"/>
<evidence type="ECO:0000255" key="2">
    <source>
        <dbReference type="HAMAP-Rule" id="MF_01491"/>
    </source>
</evidence>
<evidence type="ECO:0007829" key="3">
    <source>
        <dbReference type="PDB" id="6K6S"/>
    </source>
</evidence>
<name>RNJ1_STAES</name>
<keyword id="KW-0002">3D-structure</keyword>
<keyword id="KW-0963">Cytoplasm</keyword>
<keyword id="KW-0255">Endonuclease</keyword>
<keyword id="KW-0269">Exonuclease</keyword>
<keyword id="KW-0378">Hydrolase</keyword>
<keyword id="KW-0479">Metal-binding</keyword>
<keyword id="KW-0540">Nuclease</keyword>
<keyword id="KW-0694">RNA-binding</keyword>
<keyword id="KW-0698">rRNA processing</keyword>
<keyword id="KW-0862">Zinc</keyword>
<organism>
    <name type="scientific">Staphylococcus epidermidis (strain ATCC 12228 / FDA PCI 1200)</name>
    <dbReference type="NCBI Taxonomy" id="176280"/>
    <lineage>
        <taxon>Bacteria</taxon>
        <taxon>Bacillati</taxon>
        <taxon>Bacillota</taxon>
        <taxon>Bacilli</taxon>
        <taxon>Bacillales</taxon>
        <taxon>Staphylococcaceae</taxon>
        <taxon>Staphylococcus</taxon>
    </lineage>
</organism>
<comment type="function">
    <text evidence="1">An RNase that has 5'-3' exonuclease and possibly endoonuclease activity. Involved in maturation of rRNA and in some organisms also mRNA maturation and/or decay (By similarity).</text>
</comment>
<comment type="cofactor">
    <cofactor evidence="2">
        <name>Zn(2+)</name>
        <dbReference type="ChEBI" id="CHEBI:29105"/>
    </cofactor>
    <text evidence="2">Binds up to 2 Zn(2+) ions per subunit. It is not clear if Zn(2+) or Mg(2+) is physiologically important.</text>
</comment>
<comment type="subunit">
    <text evidence="2">Homodimer, may be a subunit of the RNA degradosome.</text>
</comment>
<comment type="subcellular location">
    <subcellularLocation>
        <location evidence="2">Cytoplasm</location>
    </subcellularLocation>
</comment>
<comment type="similarity">
    <text evidence="2">Belongs to the metallo-beta-lactamase superfamily. RNA-metabolizing metallo-beta-lactamase-like family. Bacterial RNase J subfamily.</text>
</comment>
<gene>
    <name evidence="2" type="primary">rnj1</name>
    <name type="ordered locus">SE_0787</name>
</gene>
<feature type="chain" id="PRO_0000286854" description="Ribonuclease J 1">
    <location>
        <begin position="1"/>
        <end position="560"/>
    </location>
</feature>
<feature type="binding site" evidence="2">
    <location>
        <position position="74"/>
    </location>
    <ligand>
        <name>Zn(2+)</name>
        <dbReference type="ChEBI" id="CHEBI:29105"/>
        <label>1</label>
        <note>catalytic</note>
    </ligand>
</feature>
<feature type="binding site" evidence="2">
    <location>
        <position position="76"/>
    </location>
    <ligand>
        <name>Zn(2+)</name>
        <dbReference type="ChEBI" id="CHEBI:29105"/>
        <label>1</label>
        <note>catalytic</note>
    </ligand>
</feature>
<feature type="binding site" evidence="2">
    <location>
        <position position="78"/>
    </location>
    <ligand>
        <name>Zn(2+)</name>
        <dbReference type="ChEBI" id="CHEBI:29105"/>
        <label>2</label>
        <note>catalytic</note>
    </ligand>
</feature>
<feature type="binding site" evidence="2">
    <location>
        <position position="79"/>
    </location>
    <ligand>
        <name>Zn(2+)</name>
        <dbReference type="ChEBI" id="CHEBI:29105"/>
        <label>2</label>
        <note>catalytic</note>
    </ligand>
</feature>
<feature type="binding site" evidence="2">
    <location>
        <position position="142"/>
    </location>
    <ligand>
        <name>Zn(2+)</name>
        <dbReference type="ChEBI" id="CHEBI:29105"/>
        <label>1</label>
        <note>catalytic</note>
    </ligand>
</feature>
<feature type="binding site" evidence="2">
    <location>
        <position position="164"/>
    </location>
    <ligand>
        <name>Zn(2+)</name>
        <dbReference type="ChEBI" id="CHEBI:29105"/>
        <label>1</label>
        <note>catalytic</note>
    </ligand>
</feature>
<feature type="binding site" evidence="2">
    <location>
        <position position="164"/>
    </location>
    <ligand>
        <name>Zn(2+)</name>
        <dbReference type="ChEBI" id="CHEBI:29105"/>
        <label>2</label>
        <note>catalytic</note>
    </ligand>
</feature>
<feature type="binding site" evidence="2">
    <location>
        <begin position="364"/>
        <end position="368"/>
    </location>
    <ligand>
        <name>substrate</name>
    </ligand>
</feature>
<feature type="binding site" evidence="2">
    <location>
        <position position="390"/>
    </location>
    <ligand>
        <name>Zn(2+)</name>
        <dbReference type="ChEBI" id="CHEBI:29105"/>
        <label>2</label>
        <note>catalytic</note>
    </ligand>
</feature>
<feature type="strand" evidence="3">
    <location>
        <begin position="9"/>
        <end position="15"/>
    </location>
</feature>
<feature type="strand" evidence="3">
    <location>
        <begin position="17"/>
        <end position="21"/>
    </location>
</feature>
<feature type="strand" evidence="3">
    <location>
        <begin position="24"/>
        <end position="29"/>
    </location>
</feature>
<feature type="strand" evidence="3">
    <location>
        <begin position="32"/>
        <end position="35"/>
    </location>
</feature>
<feature type="strand" evidence="3">
    <location>
        <begin position="49"/>
        <end position="55"/>
    </location>
</feature>
<feature type="helix" evidence="3">
    <location>
        <begin position="59"/>
        <end position="62"/>
    </location>
</feature>
<feature type="helix" evidence="3">
    <location>
        <begin position="64"/>
        <end position="66"/>
    </location>
</feature>
<feature type="strand" evidence="3">
    <location>
        <begin position="67"/>
        <end position="72"/>
    </location>
</feature>
<feature type="turn" evidence="3">
    <location>
        <begin position="77"/>
        <end position="79"/>
    </location>
</feature>
<feature type="turn" evidence="3">
    <location>
        <begin position="84"/>
        <end position="89"/>
    </location>
</feature>
<feature type="strand" evidence="3">
    <location>
        <begin position="94"/>
        <end position="96"/>
    </location>
</feature>
<feature type="helix" evidence="3">
    <location>
        <begin position="98"/>
        <end position="110"/>
    </location>
</feature>
<feature type="helix" evidence="3">
    <location>
        <begin position="114"/>
        <end position="116"/>
    </location>
</feature>
<feature type="strand" evidence="3">
    <location>
        <begin position="119"/>
        <end position="121"/>
    </location>
</feature>
<feature type="strand" evidence="3">
    <location>
        <begin position="134"/>
        <end position="139"/>
    </location>
</feature>
<feature type="strand" evidence="3">
    <location>
        <begin position="143"/>
        <end position="146"/>
    </location>
</feature>
<feature type="strand" evidence="3">
    <location>
        <begin position="148"/>
        <end position="153"/>
    </location>
</feature>
<feature type="strand" evidence="3">
    <location>
        <begin position="158"/>
        <end position="161"/>
    </location>
</feature>
<feature type="helix" evidence="3">
    <location>
        <begin position="178"/>
        <end position="187"/>
    </location>
</feature>
<feature type="strand" evidence="3">
    <location>
        <begin position="189"/>
        <end position="193"/>
    </location>
</feature>
<feature type="turn" evidence="3">
    <location>
        <begin position="197"/>
        <end position="200"/>
    </location>
</feature>
<feature type="helix" evidence="3">
    <location>
        <begin position="208"/>
        <end position="219"/>
    </location>
</feature>
<feature type="strand" evidence="3">
    <location>
        <begin position="226"/>
        <end position="229"/>
    </location>
</feature>
<feature type="helix" evidence="3">
    <location>
        <begin position="235"/>
        <end position="247"/>
    </location>
</feature>
<feature type="strand" evidence="3">
    <location>
        <begin position="251"/>
        <end position="254"/>
    </location>
</feature>
<feature type="helix" evidence="3">
    <location>
        <begin position="257"/>
        <end position="260"/>
    </location>
</feature>
<feature type="helix" evidence="3">
    <location>
        <begin position="264"/>
        <end position="267"/>
    </location>
</feature>
<feature type="helix" evidence="3">
    <location>
        <begin position="268"/>
        <end position="270"/>
    </location>
</feature>
<feature type="turn" evidence="3">
    <location>
        <begin position="275"/>
        <end position="277"/>
    </location>
</feature>
<feature type="helix" evidence="3">
    <location>
        <begin position="282"/>
        <end position="287"/>
    </location>
</feature>
<feature type="strand" evidence="3">
    <location>
        <begin position="293"/>
        <end position="297"/>
    </location>
</feature>
<feature type="strand" evidence="3">
    <location>
        <begin position="304"/>
        <end position="306"/>
    </location>
</feature>
<feature type="helix" evidence="3">
    <location>
        <begin position="307"/>
        <end position="312"/>
    </location>
</feature>
<feature type="strand" evidence="3">
    <location>
        <begin position="326"/>
        <end position="329"/>
    </location>
</feature>
<feature type="helix" evidence="3">
    <location>
        <begin position="338"/>
        <end position="351"/>
    </location>
</feature>
<feature type="strand" evidence="3">
    <location>
        <begin position="354"/>
        <end position="356"/>
    </location>
</feature>
<feature type="turn" evidence="3">
    <location>
        <begin position="358"/>
        <end position="362"/>
    </location>
</feature>
<feature type="helix" evidence="3">
    <location>
        <begin position="371"/>
        <end position="380"/>
    </location>
</feature>
<feature type="strand" evidence="3">
    <location>
        <begin position="383"/>
        <end position="386"/>
    </location>
</feature>
<feature type="strand" evidence="3">
    <location>
        <begin position="389"/>
        <end position="391"/>
    </location>
</feature>
<feature type="helix" evidence="3">
    <location>
        <begin position="393"/>
        <end position="404"/>
    </location>
</feature>
<feature type="turn" evidence="3">
    <location>
        <begin position="405"/>
        <end position="407"/>
    </location>
</feature>
<feature type="turn" evidence="3">
    <location>
        <begin position="410"/>
        <end position="412"/>
    </location>
</feature>
<feature type="strand" evidence="3">
    <location>
        <begin position="420"/>
        <end position="425"/>
    </location>
</feature>
<feature type="strand" evidence="3">
    <location>
        <begin position="428"/>
        <end position="430"/>
    </location>
</feature>
<feature type="strand" evidence="3">
    <location>
        <begin position="439"/>
        <end position="443"/>
    </location>
</feature>
<proteinExistence type="evidence at protein level"/>
<dbReference type="EC" id="3.1.-.-" evidence="2"/>
<dbReference type="EMBL" id="AE015929">
    <property type="protein sequence ID" value="AAO04384.1"/>
    <property type="molecule type" value="Genomic_DNA"/>
</dbReference>
<dbReference type="RefSeq" id="NP_764342.1">
    <property type="nucleotide sequence ID" value="NC_004461.1"/>
</dbReference>
<dbReference type="PDB" id="6K6S">
    <property type="method" value="X-ray"/>
    <property type="resolution" value="2.99 A"/>
    <property type="chains" value="A/B=1-560"/>
</dbReference>
<dbReference type="PDBsum" id="6K6S"/>
<dbReference type="SMR" id="Q8CT16"/>
<dbReference type="KEGG" id="sep:SE_0787"/>
<dbReference type="PATRIC" id="fig|176280.10.peg.760"/>
<dbReference type="eggNOG" id="COG0595">
    <property type="taxonomic scope" value="Bacteria"/>
</dbReference>
<dbReference type="HOGENOM" id="CLU_008727_3_1_9"/>
<dbReference type="OrthoDB" id="9758375at2"/>
<dbReference type="Proteomes" id="UP000001411">
    <property type="component" value="Chromosome"/>
</dbReference>
<dbReference type="GO" id="GO:0005737">
    <property type="term" value="C:cytoplasm"/>
    <property type="evidence" value="ECO:0007669"/>
    <property type="project" value="UniProtKB-SubCell"/>
</dbReference>
<dbReference type="GO" id="GO:0004534">
    <property type="term" value="F:5'-3' RNA exonuclease activity"/>
    <property type="evidence" value="ECO:0007669"/>
    <property type="project" value="UniProtKB-UniRule"/>
</dbReference>
<dbReference type="GO" id="GO:0003723">
    <property type="term" value="F:RNA binding"/>
    <property type="evidence" value="ECO:0007669"/>
    <property type="project" value="UniProtKB-UniRule"/>
</dbReference>
<dbReference type="GO" id="GO:0004521">
    <property type="term" value="F:RNA endonuclease activity"/>
    <property type="evidence" value="ECO:0007669"/>
    <property type="project" value="UniProtKB-UniRule"/>
</dbReference>
<dbReference type="GO" id="GO:0008270">
    <property type="term" value="F:zinc ion binding"/>
    <property type="evidence" value="ECO:0007669"/>
    <property type="project" value="InterPro"/>
</dbReference>
<dbReference type="GO" id="GO:0006364">
    <property type="term" value="P:rRNA processing"/>
    <property type="evidence" value="ECO:0007669"/>
    <property type="project" value="UniProtKB-UniRule"/>
</dbReference>
<dbReference type="CDD" id="cd07714">
    <property type="entry name" value="RNaseJ_MBL-fold"/>
    <property type="match status" value="1"/>
</dbReference>
<dbReference type="FunFam" id="3.10.20.580:FF:000001">
    <property type="entry name" value="Ribonuclease J"/>
    <property type="match status" value="1"/>
</dbReference>
<dbReference type="Gene3D" id="3.10.20.580">
    <property type="match status" value="1"/>
</dbReference>
<dbReference type="Gene3D" id="3.40.50.10710">
    <property type="entry name" value="Metallo-hydrolase/oxidoreductase"/>
    <property type="match status" value="1"/>
</dbReference>
<dbReference type="Gene3D" id="3.60.15.10">
    <property type="entry name" value="Ribonuclease Z/Hydroxyacylglutathione hydrolase-like"/>
    <property type="match status" value="1"/>
</dbReference>
<dbReference type="HAMAP" id="MF_01491">
    <property type="entry name" value="RNase_J_bact"/>
    <property type="match status" value="1"/>
</dbReference>
<dbReference type="InterPro" id="IPR001279">
    <property type="entry name" value="Metallo-B-lactamas"/>
</dbReference>
<dbReference type="InterPro" id="IPR036866">
    <property type="entry name" value="RibonucZ/Hydroxyglut_hydro"/>
</dbReference>
<dbReference type="InterPro" id="IPR011108">
    <property type="entry name" value="RMMBL"/>
</dbReference>
<dbReference type="InterPro" id="IPR004613">
    <property type="entry name" value="RNase_J"/>
</dbReference>
<dbReference type="InterPro" id="IPR042173">
    <property type="entry name" value="RNase_J_2"/>
</dbReference>
<dbReference type="InterPro" id="IPR055132">
    <property type="entry name" value="RNase_J_b_CASP"/>
</dbReference>
<dbReference type="InterPro" id="IPR030854">
    <property type="entry name" value="RNase_J_bac"/>
</dbReference>
<dbReference type="InterPro" id="IPR041636">
    <property type="entry name" value="RNase_J_C"/>
</dbReference>
<dbReference type="InterPro" id="IPR001587">
    <property type="entry name" value="RNase_J_CS"/>
</dbReference>
<dbReference type="NCBIfam" id="TIGR00649">
    <property type="entry name" value="MG423"/>
    <property type="match status" value="1"/>
</dbReference>
<dbReference type="NCBIfam" id="NF047419">
    <property type="entry name" value="RNase_J1_RnjA"/>
    <property type="match status" value="1"/>
</dbReference>
<dbReference type="PANTHER" id="PTHR43694">
    <property type="entry name" value="RIBONUCLEASE J"/>
    <property type="match status" value="1"/>
</dbReference>
<dbReference type="PANTHER" id="PTHR43694:SF1">
    <property type="entry name" value="RIBONUCLEASE J"/>
    <property type="match status" value="1"/>
</dbReference>
<dbReference type="Pfam" id="PF00753">
    <property type="entry name" value="Lactamase_B"/>
    <property type="match status" value="1"/>
</dbReference>
<dbReference type="Pfam" id="PF07521">
    <property type="entry name" value="RMMBL"/>
    <property type="match status" value="1"/>
</dbReference>
<dbReference type="Pfam" id="PF22505">
    <property type="entry name" value="RNase_J_b_CASP"/>
    <property type="match status" value="1"/>
</dbReference>
<dbReference type="Pfam" id="PF17770">
    <property type="entry name" value="RNase_J_C"/>
    <property type="match status" value="1"/>
</dbReference>
<dbReference type="PIRSF" id="PIRSF004803">
    <property type="entry name" value="RnjA"/>
    <property type="match status" value="1"/>
</dbReference>
<dbReference type="SMART" id="SM00849">
    <property type="entry name" value="Lactamase_B"/>
    <property type="match status" value="1"/>
</dbReference>
<dbReference type="SUPFAM" id="SSF56281">
    <property type="entry name" value="Metallo-hydrolase/oxidoreductase"/>
    <property type="match status" value="1"/>
</dbReference>
<dbReference type="PROSITE" id="PS01292">
    <property type="entry name" value="UPF0036"/>
    <property type="match status" value="1"/>
</dbReference>
<sequence length="560" mass="62051">MKQLHSNEVGVYALGGLGEVGKNTYAVEYKDEIVIIDAGIKFPDDNLLGIDYVIPDYTYLEQNQDKIVGLFITHGHEDHIGGVPFLLKQINVPIYGGPLALGLIRNKLEEHHLLRTTELHEIDESSVIKSKHFEISFYLTTHSIPEAYGVIVDTPEGKIVHTGDFKFDFTPVGEPANIAKMAQLGHEGVLCLLSDSTNALVPDFTLSEREVGQNVDKIFRNCKGRIIFATFASNIYRVQQAVEAAIKYNRKIVTFGRSMENNIKIGMELGYIKAPPETFIEPNKINSVPKHELLILCTGSQGEPMAALSRIANGTHKQIKIIPEDTVVFSSSPIPGNTKSINRTINALYKAGADVIHSKISNIHTSGHGSQGDQQLMLRLIQPKYFLPIHGEYRMLKAHGETGVQCGVDEDNVFIFDIGDVLALTHDSARKAGRIPSGNVLVDGSGIGDIGNVVIRDRKLLSEEGLVIVVVSIDFNTNKLLSGPDIISRGFVYMRESGQLIYDAQRKIKGDVISKLNSNKDIQWHQIKSSIIETLHPYLYEKTARKPMILPVIMKVNEDK</sequence>
<accession>Q8CT16</accession>
<protein>
    <recommendedName>
        <fullName evidence="2">Ribonuclease J 1</fullName>
        <shortName evidence="2">RNase J1</shortName>
        <ecNumber evidence="2">3.1.-.-</ecNumber>
    </recommendedName>
</protein>
<reference key="1">
    <citation type="journal article" date="2003" name="Mol. Microbiol.">
        <title>Genome-based analysis of virulence genes in a non-biofilm-forming Staphylococcus epidermidis strain (ATCC 12228).</title>
        <authorList>
            <person name="Zhang Y.-Q."/>
            <person name="Ren S.-X."/>
            <person name="Li H.-L."/>
            <person name="Wang Y.-X."/>
            <person name="Fu G."/>
            <person name="Yang J."/>
            <person name="Qin Z.-Q."/>
            <person name="Miao Y.-G."/>
            <person name="Wang W.-Y."/>
            <person name="Chen R.-S."/>
            <person name="Shen Y."/>
            <person name="Chen Z."/>
            <person name="Yuan Z.-H."/>
            <person name="Zhao G.-P."/>
            <person name="Qu D."/>
            <person name="Danchin A."/>
            <person name="Wen Y.-M."/>
        </authorList>
    </citation>
    <scope>NUCLEOTIDE SEQUENCE [LARGE SCALE GENOMIC DNA]</scope>
    <source>
        <strain>ATCC 12228 / FDA PCI 1200</strain>
    </source>
</reference>